<proteinExistence type="inferred from homology"/>
<gene>
    <name evidence="1" type="primary">murG</name>
    <name type="ordered locus">Ping_1147</name>
</gene>
<protein>
    <recommendedName>
        <fullName evidence="1">UDP-N-acetylglucosamine--N-acetylmuramyl-(pentapeptide) pyrophosphoryl-undecaprenol N-acetylglucosamine transferase</fullName>
        <ecNumber evidence="1">2.4.1.227</ecNumber>
    </recommendedName>
    <alternativeName>
        <fullName evidence="1">Undecaprenyl-PP-MurNAc-pentapeptide-UDPGlcNAc GlcNAc transferase</fullName>
    </alternativeName>
</protein>
<sequence>MRNKKTLVVMAGGTGGHVFPGLAVADALKEQGWAVSWLGTADRMEAQLVPKHGYEIDFIDIAGIRGNGLKRLLMAPIRIIKSIWQARSVLKKRRVDLVLGMGGFASGPGGIAAWSMGIPVILHEQNAVAGLTNRILSLFSKRVLMGFSGAFKSGKAILVGNPVRKQLVDLPVKKISSEDVALKVLVVGGSLGAKVLNDLLPAVFSSFDNENFNIMHQSGEGHYQAVQKGYEQRLVKANVQEFITDMASAYDWADLVICRAGALTVAELAVVGLPAIFVPLPHAVDDHQTKNAQYLVSQEAAVLIAQKELTAKKISDYLRLFLQNRKLLTAMSQKSRKAAIIDATESVASICNQLV</sequence>
<keyword id="KW-0131">Cell cycle</keyword>
<keyword id="KW-0132">Cell division</keyword>
<keyword id="KW-0997">Cell inner membrane</keyword>
<keyword id="KW-1003">Cell membrane</keyword>
<keyword id="KW-0133">Cell shape</keyword>
<keyword id="KW-0961">Cell wall biogenesis/degradation</keyword>
<keyword id="KW-0328">Glycosyltransferase</keyword>
<keyword id="KW-0472">Membrane</keyword>
<keyword id="KW-0573">Peptidoglycan synthesis</keyword>
<keyword id="KW-1185">Reference proteome</keyword>
<keyword id="KW-0808">Transferase</keyword>
<dbReference type="EC" id="2.4.1.227" evidence="1"/>
<dbReference type="EMBL" id="CP000510">
    <property type="protein sequence ID" value="ABM02984.1"/>
    <property type="molecule type" value="Genomic_DNA"/>
</dbReference>
<dbReference type="RefSeq" id="WP_011769547.1">
    <property type="nucleotide sequence ID" value="NC_008709.1"/>
</dbReference>
<dbReference type="SMR" id="A1SU19"/>
<dbReference type="STRING" id="357804.Ping_1147"/>
<dbReference type="CAZy" id="GT28">
    <property type="family name" value="Glycosyltransferase Family 28"/>
</dbReference>
<dbReference type="KEGG" id="pin:Ping_1147"/>
<dbReference type="eggNOG" id="COG0707">
    <property type="taxonomic scope" value="Bacteria"/>
</dbReference>
<dbReference type="HOGENOM" id="CLU_037404_2_0_6"/>
<dbReference type="OrthoDB" id="9808936at2"/>
<dbReference type="UniPathway" id="UPA00219"/>
<dbReference type="Proteomes" id="UP000000639">
    <property type="component" value="Chromosome"/>
</dbReference>
<dbReference type="GO" id="GO:0005886">
    <property type="term" value="C:plasma membrane"/>
    <property type="evidence" value="ECO:0007669"/>
    <property type="project" value="UniProtKB-SubCell"/>
</dbReference>
<dbReference type="GO" id="GO:0051991">
    <property type="term" value="F:UDP-N-acetyl-D-glucosamine:N-acetylmuramoyl-L-alanyl-D-glutamyl-meso-2,6-diaminopimelyl-D-alanyl-D-alanine-diphosphoundecaprenol 4-beta-N-acetylglucosaminlytransferase activity"/>
    <property type="evidence" value="ECO:0007669"/>
    <property type="project" value="RHEA"/>
</dbReference>
<dbReference type="GO" id="GO:0050511">
    <property type="term" value="F:undecaprenyldiphospho-muramoylpentapeptide beta-N-acetylglucosaminyltransferase activity"/>
    <property type="evidence" value="ECO:0007669"/>
    <property type="project" value="UniProtKB-UniRule"/>
</dbReference>
<dbReference type="GO" id="GO:0005975">
    <property type="term" value="P:carbohydrate metabolic process"/>
    <property type="evidence" value="ECO:0007669"/>
    <property type="project" value="InterPro"/>
</dbReference>
<dbReference type="GO" id="GO:0051301">
    <property type="term" value="P:cell division"/>
    <property type="evidence" value="ECO:0007669"/>
    <property type="project" value="UniProtKB-KW"/>
</dbReference>
<dbReference type="GO" id="GO:0071555">
    <property type="term" value="P:cell wall organization"/>
    <property type="evidence" value="ECO:0007669"/>
    <property type="project" value="UniProtKB-KW"/>
</dbReference>
<dbReference type="GO" id="GO:0030259">
    <property type="term" value="P:lipid glycosylation"/>
    <property type="evidence" value="ECO:0007669"/>
    <property type="project" value="UniProtKB-UniRule"/>
</dbReference>
<dbReference type="GO" id="GO:0009252">
    <property type="term" value="P:peptidoglycan biosynthetic process"/>
    <property type="evidence" value="ECO:0007669"/>
    <property type="project" value="UniProtKB-UniRule"/>
</dbReference>
<dbReference type="GO" id="GO:0008360">
    <property type="term" value="P:regulation of cell shape"/>
    <property type="evidence" value="ECO:0007669"/>
    <property type="project" value="UniProtKB-KW"/>
</dbReference>
<dbReference type="CDD" id="cd03785">
    <property type="entry name" value="GT28_MurG"/>
    <property type="match status" value="1"/>
</dbReference>
<dbReference type="Gene3D" id="3.40.50.2000">
    <property type="entry name" value="Glycogen Phosphorylase B"/>
    <property type="match status" value="2"/>
</dbReference>
<dbReference type="HAMAP" id="MF_00033">
    <property type="entry name" value="MurG"/>
    <property type="match status" value="1"/>
</dbReference>
<dbReference type="InterPro" id="IPR006009">
    <property type="entry name" value="GlcNAc_MurG"/>
</dbReference>
<dbReference type="InterPro" id="IPR007235">
    <property type="entry name" value="Glyco_trans_28_C"/>
</dbReference>
<dbReference type="InterPro" id="IPR004276">
    <property type="entry name" value="GlycoTrans_28_N"/>
</dbReference>
<dbReference type="NCBIfam" id="TIGR01133">
    <property type="entry name" value="murG"/>
    <property type="match status" value="1"/>
</dbReference>
<dbReference type="PANTHER" id="PTHR21015:SF22">
    <property type="entry name" value="GLYCOSYLTRANSFERASE"/>
    <property type="match status" value="1"/>
</dbReference>
<dbReference type="PANTHER" id="PTHR21015">
    <property type="entry name" value="UDP-N-ACETYLGLUCOSAMINE--N-ACETYLMURAMYL-(PENTAPEPTIDE) PYROPHOSPHORYL-UNDECAPRENOL N-ACETYLGLUCOSAMINE TRANSFERASE 1"/>
    <property type="match status" value="1"/>
</dbReference>
<dbReference type="Pfam" id="PF04101">
    <property type="entry name" value="Glyco_tran_28_C"/>
    <property type="match status" value="1"/>
</dbReference>
<dbReference type="Pfam" id="PF03033">
    <property type="entry name" value="Glyco_transf_28"/>
    <property type="match status" value="1"/>
</dbReference>
<dbReference type="SUPFAM" id="SSF53756">
    <property type="entry name" value="UDP-Glycosyltransferase/glycogen phosphorylase"/>
    <property type="match status" value="1"/>
</dbReference>
<evidence type="ECO:0000255" key="1">
    <source>
        <dbReference type="HAMAP-Rule" id="MF_00033"/>
    </source>
</evidence>
<reference key="1">
    <citation type="journal article" date="2008" name="BMC Genomics">
        <title>Genomics of an extreme psychrophile, Psychromonas ingrahamii.</title>
        <authorList>
            <person name="Riley M."/>
            <person name="Staley J.T."/>
            <person name="Danchin A."/>
            <person name="Wang T.Z."/>
            <person name="Brettin T.S."/>
            <person name="Hauser L.J."/>
            <person name="Land M.L."/>
            <person name="Thompson L.S."/>
        </authorList>
    </citation>
    <scope>NUCLEOTIDE SEQUENCE [LARGE SCALE GENOMIC DNA]</scope>
    <source>
        <strain>DSM 17664 / CCUG 51855 / 37</strain>
    </source>
</reference>
<comment type="function">
    <text evidence="1">Cell wall formation. Catalyzes the transfer of a GlcNAc subunit on undecaprenyl-pyrophosphoryl-MurNAc-pentapeptide (lipid intermediate I) to form undecaprenyl-pyrophosphoryl-MurNAc-(pentapeptide)GlcNAc (lipid intermediate II).</text>
</comment>
<comment type="catalytic activity">
    <reaction evidence="1">
        <text>di-trans,octa-cis-undecaprenyl diphospho-N-acetyl-alpha-D-muramoyl-L-alanyl-D-glutamyl-meso-2,6-diaminopimeloyl-D-alanyl-D-alanine + UDP-N-acetyl-alpha-D-glucosamine = di-trans,octa-cis-undecaprenyl diphospho-[N-acetyl-alpha-D-glucosaminyl-(1-&gt;4)]-N-acetyl-alpha-D-muramoyl-L-alanyl-D-glutamyl-meso-2,6-diaminopimeloyl-D-alanyl-D-alanine + UDP + H(+)</text>
        <dbReference type="Rhea" id="RHEA:31227"/>
        <dbReference type="ChEBI" id="CHEBI:15378"/>
        <dbReference type="ChEBI" id="CHEBI:57705"/>
        <dbReference type="ChEBI" id="CHEBI:58223"/>
        <dbReference type="ChEBI" id="CHEBI:61387"/>
        <dbReference type="ChEBI" id="CHEBI:61388"/>
        <dbReference type="EC" id="2.4.1.227"/>
    </reaction>
</comment>
<comment type="pathway">
    <text evidence="1">Cell wall biogenesis; peptidoglycan biosynthesis.</text>
</comment>
<comment type="subcellular location">
    <subcellularLocation>
        <location evidence="1">Cell inner membrane</location>
        <topology evidence="1">Peripheral membrane protein</topology>
        <orientation evidence="1">Cytoplasmic side</orientation>
    </subcellularLocation>
</comment>
<comment type="similarity">
    <text evidence="1">Belongs to the glycosyltransferase 28 family. MurG subfamily.</text>
</comment>
<feature type="chain" id="PRO_0000315144" description="UDP-N-acetylglucosamine--N-acetylmuramyl-(pentapeptide) pyrophosphoryl-undecaprenol N-acetylglucosamine transferase">
    <location>
        <begin position="1"/>
        <end position="355"/>
    </location>
</feature>
<feature type="binding site" evidence="1">
    <location>
        <begin position="14"/>
        <end position="16"/>
    </location>
    <ligand>
        <name>UDP-N-acetyl-alpha-D-glucosamine</name>
        <dbReference type="ChEBI" id="CHEBI:57705"/>
    </ligand>
</feature>
<feature type="binding site" evidence="1">
    <location>
        <position position="126"/>
    </location>
    <ligand>
        <name>UDP-N-acetyl-alpha-D-glucosamine</name>
        <dbReference type="ChEBI" id="CHEBI:57705"/>
    </ligand>
</feature>
<feature type="binding site" evidence="1">
    <location>
        <position position="164"/>
    </location>
    <ligand>
        <name>UDP-N-acetyl-alpha-D-glucosamine</name>
        <dbReference type="ChEBI" id="CHEBI:57705"/>
    </ligand>
</feature>
<feature type="binding site" evidence="1">
    <location>
        <position position="190"/>
    </location>
    <ligand>
        <name>UDP-N-acetyl-alpha-D-glucosamine</name>
        <dbReference type="ChEBI" id="CHEBI:57705"/>
    </ligand>
</feature>
<feature type="binding site" evidence="1">
    <location>
        <position position="243"/>
    </location>
    <ligand>
        <name>UDP-N-acetyl-alpha-D-glucosamine</name>
        <dbReference type="ChEBI" id="CHEBI:57705"/>
    </ligand>
</feature>
<feature type="binding site" evidence="1">
    <location>
        <begin position="262"/>
        <end position="267"/>
    </location>
    <ligand>
        <name>UDP-N-acetyl-alpha-D-glucosamine</name>
        <dbReference type="ChEBI" id="CHEBI:57705"/>
    </ligand>
</feature>
<feature type="binding site" evidence="1">
    <location>
        <position position="288"/>
    </location>
    <ligand>
        <name>UDP-N-acetyl-alpha-D-glucosamine</name>
        <dbReference type="ChEBI" id="CHEBI:57705"/>
    </ligand>
</feature>
<accession>A1SU19</accession>
<name>MURG_PSYIN</name>
<organism>
    <name type="scientific">Psychromonas ingrahamii (strain DSM 17664 / CCUG 51855 / 37)</name>
    <dbReference type="NCBI Taxonomy" id="357804"/>
    <lineage>
        <taxon>Bacteria</taxon>
        <taxon>Pseudomonadati</taxon>
        <taxon>Pseudomonadota</taxon>
        <taxon>Gammaproteobacteria</taxon>
        <taxon>Alteromonadales</taxon>
        <taxon>Psychromonadaceae</taxon>
        <taxon>Psychromonas</taxon>
    </lineage>
</organism>